<evidence type="ECO:0000255" key="1">
    <source>
        <dbReference type="HAMAP-Rule" id="MF_01025"/>
    </source>
</evidence>
<evidence type="ECO:0000305" key="2"/>
<keyword id="KW-0028">Amino-acid biosynthesis</keyword>
<keyword id="KW-0100">Branched-chain amino acid biosynthesis</keyword>
<keyword id="KW-0963">Cytoplasm</keyword>
<keyword id="KW-0432">Leucine biosynthesis</keyword>
<keyword id="KW-0464">Manganese</keyword>
<keyword id="KW-0479">Metal-binding</keyword>
<keyword id="KW-1185">Reference proteome</keyword>
<keyword id="KW-0808">Transferase</keyword>
<reference key="1">
    <citation type="journal article" date="1999" name="Nature">
        <title>Evidence for lateral gene transfer between Archaea and Bacteria from genome sequence of Thermotoga maritima.</title>
        <authorList>
            <person name="Nelson K.E."/>
            <person name="Clayton R.A."/>
            <person name="Gill S.R."/>
            <person name="Gwinn M.L."/>
            <person name="Dodson R.J."/>
            <person name="Haft D.H."/>
            <person name="Hickey E.K."/>
            <person name="Peterson J.D."/>
            <person name="Nelson W.C."/>
            <person name="Ketchum K.A."/>
            <person name="McDonald L.A."/>
            <person name="Utterback T.R."/>
            <person name="Malek J.A."/>
            <person name="Linher K.D."/>
            <person name="Garrett M.M."/>
            <person name="Stewart A.M."/>
            <person name="Cotton M.D."/>
            <person name="Pratt M.S."/>
            <person name="Phillips C.A."/>
            <person name="Richardson D.L."/>
            <person name="Heidelberg J.F."/>
            <person name="Sutton G.G."/>
            <person name="Fleischmann R.D."/>
            <person name="Eisen J.A."/>
            <person name="White O."/>
            <person name="Salzberg S.L."/>
            <person name="Smith H.O."/>
            <person name="Venter J.C."/>
            <person name="Fraser C.M."/>
        </authorList>
    </citation>
    <scope>NUCLEOTIDE SEQUENCE [LARGE SCALE GENOMIC DNA]</scope>
    <source>
        <strain>ATCC 43589 / DSM 3109 / JCM 10099 / NBRC 100826 / MSB8</strain>
    </source>
</reference>
<protein>
    <recommendedName>
        <fullName evidence="1">2-isopropylmalate synthase</fullName>
        <ecNumber evidence="1">2.3.3.13</ecNumber>
    </recommendedName>
    <alternativeName>
        <fullName evidence="1">Alpha-IPM synthase</fullName>
    </alternativeName>
    <alternativeName>
        <fullName evidence="1">Alpha-isopropylmalate synthase</fullName>
    </alternativeName>
</protein>
<feature type="chain" id="PRO_0000140391" description="2-isopropylmalate synthase">
    <location>
        <begin position="1"/>
        <end position="513"/>
    </location>
</feature>
<feature type="domain" description="Pyruvate carboxyltransferase" evidence="1">
    <location>
        <begin position="4"/>
        <end position="268"/>
    </location>
</feature>
<feature type="region of interest" description="Regulatory domain" evidence="1">
    <location>
        <begin position="392"/>
        <end position="513"/>
    </location>
</feature>
<feature type="binding site" evidence="1">
    <location>
        <position position="13"/>
    </location>
    <ligand>
        <name>Mn(2+)</name>
        <dbReference type="ChEBI" id="CHEBI:29035"/>
    </ligand>
</feature>
<feature type="binding site" evidence="1">
    <location>
        <position position="203"/>
    </location>
    <ligand>
        <name>Mn(2+)</name>
        <dbReference type="ChEBI" id="CHEBI:29035"/>
    </ligand>
</feature>
<feature type="binding site" evidence="1">
    <location>
        <position position="205"/>
    </location>
    <ligand>
        <name>Mn(2+)</name>
        <dbReference type="ChEBI" id="CHEBI:29035"/>
    </ligand>
</feature>
<feature type="binding site" evidence="1">
    <location>
        <position position="239"/>
    </location>
    <ligand>
        <name>Mn(2+)</name>
        <dbReference type="ChEBI" id="CHEBI:29035"/>
    </ligand>
</feature>
<dbReference type="EC" id="2.3.3.13" evidence="1"/>
<dbReference type="EMBL" id="AE000512">
    <property type="protein sequence ID" value="AAD35638.1"/>
    <property type="molecule type" value="Genomic_DNA"/>
</dbReference>
<dbReference type="PIR" id="G72362">
    <property type="entry name" value="G72362"/>
</dbReference>
<dbReference type="RefSeq" id="NP_228363.1">
    <property type="nucleotide sequence ID" value="NC_000853.1"/>
</dbReference>
<dbReference type="RefSeq" id="WP_004081333.1">
    <property type="nucleotide sequence ID" value="NZ_CP011107.1"/>
</dbReference>
<dbReference type="SMR" id="Q9WZ23"/>
<dbReference type="FunCoup" id="Q9WZ23">
    <property type="interactions" value="287"/>
</dbReference>
<dbReference type="STRING" id="243274.TM_0553"/>
<dbReference type="PaxDb" id="243274-THEMA_01910"/>
<dbReference type="EnsemblBacteria" id="AAD35638">
    <property type="protein sequence ID" value="AAD35638"/>
    <property type="gene ID" value="TM_0553"/>
</dbReference>
<dbReference type="KEGG" id="tma:TM0553"/>
<dbReference type="KEGG" id="tmi:THEMA_01910"/>
<dbReference type="KEGG" id="tmm:Tmari_0550"/>
<dbReference type="KEGG" id="tmw:THMA_0566"/>
<dbReference type="eggNOG" id="COG0119">
    <property type="taxonomic scope" value="Bacteria"/>
</dbReference>
<dbReference type="InParanoid" id="Q9WZ23"/>
<dbReference type="OrthoDB" id="9804858at2"/>
<dbReference type="UniPathway" id="UPA00048">
    <property type="reaction ID" value="UER00070"/>
</dbReference>
<dbReference type="Proteomes" id="UP000008183">
    <property type="component" value="Chromosome"/>
</dbReference>
<dbReference type="GO" id="GO:0005737">
    <property type="term" value="C:cytoplasm"/>
    <property type="evidence" value="ECO:0007669"/>
    <property type="project" value="UniProtKB-SubCell"/>
</dbReference>
<dbReference type="GO" id="GO:0003852">
    <property type="term" value="F:2-isopropylmalate synthase activity"/>
    <property type="evidence" value="ECO:0000318"/>
    <property type="project" value="GO_Central"/>
</dbReference>
<dbReference type="GO" id="GO:0003985">
    <property type="term" value="F:acetyl-CoA C-acetyltransferase activity"/>
    <property type="evidence" value="ECO:0007669"/>
    <property type="project" value="UniProtKB-UniRule"/>
</dbReference>
<dbReference type="GO" id="GO:0030145">
    <property type="term" value="F:manganese ion binding"/>
    <property type="evidence" value="ECO:0007669"/>
    <property type="project" value="UniProtKB-UniRule"/>
</dbReference>
<dbReference type="GO" id="GO:0009098">
    <property type="term" value="P:L-leucine biosynthetic process"/>
    <property type="evidence" value="ECO:0000318"/>
    <property type="project" value="GO_Central"/>
</dbReference>
<dbReference type="CDD" id="cd07940">
    <property type="entry name" value="DRE_TIM_IPMS"/>
    <property type="match status" value="1"/>
</dbReference>
<dbReference type="FunFam" id="1.10.238.260:FF:000001">
    <property type="entry name" value="2-isopropylmalate synthase"/>
    <property type="match status" value="1"/>
</dbReference>
<dbReference type="FunFam" id="3.20.20.70:FF:000010">
    <property type="entry name" value="2-isopropylmalate synthase"/>
    <property type="match status" value="1"/>
</dbReference>
<dbReference type="FunFam" id="3.30.160.270:FF:000001">
    <property type="entry name" value="2-isopropylmalate synthase"/>
    <property type="match status" value="1"/>
</dbReference>
<dbReference type="Gene3D" id="1.10.238.260">
    <property type="match status" value="1"/>
</dbReference>
<dbReference type="Gene3D" id="3.30.160.270">
    <property type="match status" value="1"/>
</dbReference>
<dbReference type="Gene3D" id="3.20.20.70">
    <property type="entry name" value="Aldolase class I"/>
    <property type="match status" value="1"/>
</dbReference>
<dbReference type="HAMAP" id="MF_01025">
    <property type="entry name" value="LeuA_type1"/>
    <property type="match status" value="1"/>
</dbReference>
<dbReference type="InterPro" id="IPR050073">
    <property type="entry name" value="2-IPM_HCS-like"/>
</dbReference>
<dbReference type="InterPro" id="IPR013709">
    <property type="entry name" value="2-isopropylmalate_synth_dimer"/>
</dbReference>
<dbReference type="InterPro" id="IPR002034">
    <property type="entry name" value="AIPM/Hcit_synth_CS"/>
</dbReference>
<dbReference type="InterPro" id="IPR013785">
    <property type="entry name" value="Aldolase_TIM"/>
</dbReference>
<dbReference type="InterPro" id="IPR054691">
    <property type="entry name" value="LeuA/HCS_post-cat"/>
</dbReference>
<dbReference type="InterPro" id="IPR036230">
    <property type="entry name" value="LeuA_allosteric_dom_sf"/>
</dbReference>
<dbReference type="InterPro" id="IPR005671">
    <property type="entry name" value="LeuA_bact_synth"/>
</dbReference>
<dbReference type="InterPro" id="IPR000891">
    <property type="entry name" value="PYR_CT"/>
</dbReference>
<dbReference type="NCBIfam" id="TIGR00973">
    <property type="entry name" value="leuA_bact"/>
    <property type="match status" value="1"/>
</dbReference>
<dbReference type="NCBIfam" id="NF002085">
    <property type="entry name" value="PRK00915.1-2"/>
    <property type="match status" value="1"/>
</dbReference>
<dbReference type="NCBIfam" id="NF002086">
    <property type="entry name" value="PRK00915.1-3"/>
    <property type="match status" value="1"/>
</dbReference>
<dbReference type="PANTHER" id="PTHR10277:SF9">
    <property type="entry name" value="2-ISOPROPYLMALATE SYNTHASE 1, CHLOROPLASTIC-RELATED"/>
    <property type="match status" value="1"/>
</dbReference>
<dbReference type="PANTHER" id="PTHR10277">
    <property type="entry name" value="HOMOCITRATE SYNTHASE-RELATED"/>
    <property type="match status" value="1"/>
</dbReference>
<dbReference type="Pfam" id="PF22617">
    <property type="entry name" value="HCS_D2"/>
    <property type="match status" value="1"/>
</dbReference>
<dbReference type="Pfam" id="PF00682">
    <property type="entry name" value="HMGL-like"/>
    <property type="match status" value="1"/>
</dbReference>
<dbReference type="Pfam" id="PF08502">
    <property type="entry name" value="LeuA_dimer"/>
    <property type="match status" value="1"/>
</dbReference>
<dbReference type="SMART" id="SM00917">
    <property type="entry name" value="LeuA_dimer"/>
    <property type="match status" value="1"/>
</dbReference>
<dbReference type="SUPFAM" id="SSF110921">
    <property type="entry name" value="2-isopropylmalate synthase LeuA, allosteric (dimerisation) domain"/>
    <property type="match status" value="1"/>
</dbReference>
<dbReference type="SUPFAM" id="SSF51569">
    <property type="entry name" value="Aldolase"/>
    <property type="match status" value="1"/>
</dbReference>
<dbReference type="PROSITE" id="PS00815">
    <property type="entry name" value="AIPM_HOMOCIT_SYNTH_1"/>
    <property type="match status" value="1"/>
</dbReference>
<dbReference type="PROSITE" id="PS00816">
    <property type="entry name" value="AIPM_HOMOCIT_SYNTH_2"/>
    <property type="match status" value="1"/>
</dbReference>
<dbReference type="PROSITE" id="PS50991">
    <property type="entry name" value="PYR_CT"/>
    <property type="match status" value="1"/>
</dbReference>
<sequence length="513" mass="56805">MRRIKIFDTTLRDGEQSPGASMSIEEKVEMALMLEDLGVDLIEAGFPVSSPVQFEAVKRVASAVQKPIVVGLARCVEKDIDAAYEALKDRPKDKRMIHVFIATSPIHRKYKLRMEKEEILERIRRYVGYAKQFFDLVEFSAEDASRTEVPFLIEAYKTAIEAGATTINVPDTVGYALPDEFGELIKTLREGVPGIENVDLSVHCHNDLGLAVANSLAAVQNGATQVEVTLNGIGERAGNCALEEFVMILKVRKDKLPYETGIKTELIYPASRLLTHITGLIPSRNKPIVGENVFLHESGIHQDGVLKHRETYEIMKPSDIGRSSETLVLGRHSGKHALRKKLETYGIKLDEETFQKVFEKFTELADRKKEVYDDDLFSIVSEVLREPINGYKLVHFHVHTGNTLLPTAAVVLQVGNEKREAAEAGNGPVDAIFKAIDKALGIQPKLEEYIIQAVGTGKNAQGEVKLTLRIDNELYSGRGVSTDIVEASAIAYINAINKYLIAKGLLRKNGGAE</sequence>
<proteinExistence type="inferred from homology"/>
<name>LEU1_THEMA</name>
<organism>
    <name type="scientific">Thermotoga maritima (strain ATCC 43589 / DSM 3109 / JCM 10099 / NBRC 100826 / MSB8)</name>
    <dbReference type="NCBI Taxonomy" id="243274"/>
    <lineage>
        <taxon>Bacteria</taxon>
        <taxon>Thermotogati</taxon>
        <taxon>Thermotogota</taxon>
        <taxon>Thermotogae</taxon>
        <taxon>Thermotogales</taxon>
        <taxon>Thermotogaceae</taxon>
        <taxon>Thermotoga</taxon>
    </lineage>
</organism>
<comment type="function">
    <text evidence="1">Catalyzes the condensation of the acetyl group of acetyl-CoA with 3-methyl-2-oxobutanoate (2-ketoisovalerate) to form 3-carboxy-3-hydroxy-4-methylpentanoate (2-isopropylmalate).</text>
</comment>
<comment type="catalytic activity">
    <reaction evidence="1">
        <text>3-methyl-2-oxobutanoate + acetyl-CoA + H2O = (2S)-2-isopropylmalate + CoA + H(+)</text>
        <dbReference type="Rhea" id="RHEA:21524"/>
        <dbReference type="ChEBI" id="CHEBI:1178"/>
        <dbReference type="ChEBI" id="CHEBI:11851"/>
        <dbReference type="ChEBI" id="CHEBI:15377"/>
        <dbReference type="ChEBI" id="CHEBI:15378"/>
        <dbReference type="ChEBI" id="CHEBI:57287"/>
        <dbReference type="ChEBI" id="CHEBI:57288"/>
        <dbReference type="EC" id="2.3.3.13"/>
    </reaction>
</comment>
<comment type="cofactor">
    <cofactor evidence="1">
        <name>Mn(2+)</name>
        <dbReference type="ChEBI" id="CHEBI:29035"/>
    </cofactor>
</comment>
<comment type="pathway">
    <text evidence="1">Amino-acid biosynthesis; L-leucine biosynthesis; L-leucine from 3-methyl-2-oxobutanoate: step 1/4.</text>
</comment>
<comment type="subunit">
    <text evidence="1">Homodimer.</text>
</comment>
<comment type="subcellular location">
    <subcellularLocation>
        <location evidence="1">Cytoplasm</location>
    </subcellularLocation>
</comment>
<comment type="similarity">
    <text evidence="1 2">Belongs to the alpha-IPM synthase/homocitrate synthase family. LeuA type 1 subfamily.</text>
</comment>
<accession>Q9WZ23</accession>
<gene>
    <name evidence="1" type="primary">leuA</name>
    <name type="ordered locus">TM_0553</name>
</gene>